<accession>P0A589</accession>
<accession>A0A1R3Y469</accession>
<accession>O06253</accession>
<accession>O33274</accession>
<accession>X2BNB0</accession>
<name>GLMS_MYCBO</name>
<keyword id="KW-0032">Aminotransferase</keyword>
<keyword id="KW-0963">Cytoplasm</keyword>
<keyword id="KW-0315">Glutamine amidotransferase</keyword>
<keyword id="KW-1185">Reference proteome</keyword>
<keyword id="KW-0677">Repeat</keyword>
<keyword id="KW-0808">Transferase</keyword>
<organism>
    <name type="scientific">Mycobacterium bovis (strain ATCC BAA-935 / AF2122/97)</name>
    <dbReference type="NCBI Taxonomy" id="233413"/>
    <lineage>
        <taxon>Bacteria</taxon>
        <taxon>Bacillati</taxon>
        <taxon>Actinomycetota</taxon>
        <taxon>Actinomycetes</taxon>
        <taxon>Mycobacteriales</taxon>
        <taxon>Mycobacteriaceae</taxon>
        <taxon>Mycobacterium</taxon>
        <taxon>Mycobacterium tuberculosis complex</taxon>
    </lineage>
</organism>
<evidence type="ECO:0000255" key="1">
    <source>
        <dbReference type="HAMAP-Rule" id="MF_00164"/>
    </source>
</evidence>
<protein>
    <recommendedName>
        <fullName evidence="1">Glutamine--fructose-6-phosphate aminotransferase [isomerizing]</fullName>
        <ecNumber evidence="1">2.6.1.16</ecNumber>
    </recommendedName>
    <alternativeName>
        <fullName evidence="1">D-fructose-6-phosphate amidotransferase</fullName>
    </alternativeName>
    <alternativeName>
        <fullName evidence="1">GFAT</fullName>
    </alternativeName>
    <alternativeName>
        <fullName evidence="1">Glucosamine-6-phosphate synthase</fullName>
    </alternativeName>
    <alternativeName>
        <fullName evidence="1">Hexosephosphate aminotransferase</fullName>
    </alternativeName>
    <alternativeName>
        <fullName evidence="1">L-glutamine--D-fructose-6-phosphate amidotransferase</fullName>
    </alternativeName>
</protein>
<feature type="initiator methionine" description="Removed" evidence="1">
    <location>
        <position position="1"/>
    </location>
</feature>
<feature type="chain" id="PRO_0000135358" description="Glutamine--fructose-6-phosphate aminotransferase [isomerizing]">
    <location>
        <begin position="2"/>
        <end position="624"/>
    </location>
</feature>
<feature type="domain" description="Glutamine amidotransferase type-2" evidence="1">
    <location>
        <begin position="2"/>
        <end position="225"/>
    </location>
</feature>
<feature type="domain" description="SIS 1" evidence="1">
    <location>
        <begin position="297"/>
        <end position="436"/>
    </location>
</feature>
<feature type="domain" description="SIS 2" evidence="1">
    <location>
        <begin position="469"/>
        <end position="614"/>
    </location>
</feature>
<feature type="active site" description="Nucleophile; for GATase activity" evidence="1">
    <location>
        <position position="2"/>
    </location>
</feature>
<feature type="active site" description="For Fru-6P isomerization activity" evidence="1">
    <location>
        <position position="619"/>
    </location>
</feature>
<comment type="function">
    <text evidence="1">Catalyzes the first step in hexosamine metabolism, converting fructose-6P into glucosamine-6P using glutamine as a nitrogen source.</text>
</comment>
<comment type="catalytic activity">
    <reaction evidence="1">
        <text>D-fructose 6-phosphate + L-glutamine = D-glucosamine 6-phosphate + L-glutamate</text>
        <dbReference type="Rhea" id="RHEA:13237"/>
        <dbReference type="ChEBI" id="CHEBI:29985"/>
        <dbReference type="ChEBI" id="CHEBI:58359"/>
        <dbReference type="ChEBI" id="CHEBI:58725"/>
        <dbReference type="ChEBI" id="CHEBI:61527"/>
        <dbReference type="EC" id="2.6.1.16"/>
    </reaction>
</comment>
<comment type="subunit">
    <text evidence="1">Homodimer.</text>
</comment>
<comment type="subcellular location">
    <subcellularLocation>
        <location evidence="1">Cytoplasm</location>
    </subcellularLocation>
</comment>
<sequence length="624" mass="67572">MCGIVGYVGRRPAYVVVMDALRRMEYRGYDSSGIALVDGGTLTVRRRAGRLANLEEAVAEMPSTALSGTTGLGHTRWATHGRPTDRNAHPHRDAAGKIAVVHNGIIENFAVLRRELETAGVEFASDTDTEVAAHLVARAYRHGETADDFVGSVLAVLRRLEGHFTLVFANADDPGTLVAARRSTPLVLGIGDNEMFVGSDVAAFIEHTREAVELGQDQAVVITADGYRISDFDGNDGLQAGRDFRPFHIDWDLAAAEKGGYEYFMLKEIAEQPAAVADTLLGHFVGGRIVLDEQRLSDQELREIDKVFVVACGTAYHSGLLAKYAIEHWTRLPVEVELASEFRYRDPVLDRSTLVVAISQSGETADTLEAVRHAKEQKAKVLAICNTNGSQIPRECDAVLYTRAGPEIGVASTKTFLAQIAANYLLGLALAQARGTKYPDEVEREYHELEAMPDLVARVIAATGPVAELAHRFAQSSTVLFLGRHVGYPVALEGALKLKELAYMHAEGFAAGELKHGPIALIEDGLPVIVVMPSPKGSATLHAKLLSNIREIQTRGAVTIVIAEEGDETVRPYADHLIEIPAVSTLLQPLLSTIPLQVFAASVARARGYDVDKPRNLAKSVTVE</sequence>
<dbReference type="EC" id="2.6.1.16" evidence="1"/>
<dbReference type="EMBL" id="LT708304">
    <property type="protein sequence ID" value="SIU02094.1"/>
    <property type="molecule type" value="Genomic_DNA"/>
</dbReference>
<dbReference type="RefSeq" id="NP_857106.1">
    <property type="nucleotide sequence ID" value="NC_002945.3"/>
</dbReference>
<dbReference type="RefSeq" id="WP_003418289.1">
    <property type="nucleotide sequence ID" value="NC_002945.4"/>
</dbReference>
<dbReference type="SMR" id="P0A589"/>
<dbReference type="KEGG" id="mbo:BQ2027_MB3466C"/>
<dbReference type="PATRIC" id="fig|233413.5.peg.3803"/>
<dbReference type="Proteomes" id="UP000001419">
    <property type="component" value="Chromosome"/>
</dbReference>
<dbReference type="GO" id="GO:0005829">
    <property type="term" value="C:cytosol"/>
    <property type="evidence" value="ECO:0007669"/>
    <property type="project" value="TreeGrafter"/>
</dbReference>
<dbReference type="GO" id="GO:0097367">
    <property type="term" value="F:carbohydrate derivative binding"/>
    <property type="evidence" value="ECO:0007669"/>
    <property type="project" value="InterPro"/>
</dbReference>
<dbReference type="GO" id="GO:0004360">
    <property type="term" value="F:glutamine-fructose-6-phosphate transaminase (isomerizing) activity"/>
    <property type="evidence" value="ECO:0007669"/>
    <property type="project" value="UniProtKB-UniRule"/>
</dbReference>
<dbReference type="GO" id="GO:0005975">
    <property type="term" value="P:carbohydrate metabolic process"/>
    <property type="evidence" value="ECO:0007669"/>
    <property type="project" value="UniProtKB-UniRule"/>
</dbReference>
<dbReference type="GO" id="GO:0006002">
    <property type="term" value="P:fructose 6-phosphate metabolic process"/>
    <property type="evidence" value="ECO:0007669"/>
    <property type="project" value="TreeGrafter"/>
</dbReference>
<dbReference type="GO" id="GO:0006487">
    <property type="term" value="P:protein N-linked glycosylation"/>
    <property type="evidence" value="ECO:0007669"/>
    <property type="project" value="TreeGrafter"/>
</dbReference>
<dbReference type="GO" id="GO:0006047">
    <property type="term" value="P:UDP-N-acetylglucosamine metabolic process"/>
    <property type="evidence" value="ECO:0007669"/>
    <property type="project" value="TreeGrafter"/>
</dbReference>
<dbReference type="CDD" id="cd00714">
    <property type="entry name" value="GFAT"/>
    <property type="match status" value="1"/>
</dbReference>
<dbReference type="CDD" id="cd05008">
    <property type="entry name" value="SIS_GlmS_GlmD_1"/>
    <property type="match status" value="1"/>
</dbReference>
<dbReference type="CDD" id="cd05009">
    <property type="entry name" value="SIS_GlmS_GlmD_2"/>
    <property type="match status" value="1"/>
</dbReference>
<dbReference type="FunFam" id="3.40.50.10490:FF:000001">
    <property type="entry name" value="Glutamine--fructose-6-phosphate aminotransferase [isomerizing]"/>
    <property type="match status" value="1"/>
</dbReference>
<dbReference type="FunFam" id="3.40.50.10490:FF:000002">
    <property type="entry name" value="Glutamine--fructose-6-phosphate aminotransferase [isomerizing]"/>
    <property type="match status" value="1"/>
</dbReference>
<dbReference type="FunFam" id="3.60.20.10:FF:000006">
    <property type="entry name" value="Glutamine--fructose-6-phosphate aminotransferase [isomerizing]"/>
    <property type="match status" value="1"/>
</dbReference>
<dbReference type="Gene3D" id="3.40.50.10490">
    <property type="entry name" value="Glucose-6-phosphate isomerase like protein, domain 1"/>
    <property type="match status" value="2"/>
</dbReference>
<dbReference type="Gene3D" id="3.60.20.10">
    <property type="entry name" value="Glutamine Phosphoribosylpyrophosphate, subunit 1, domain 1"/>
    <property type="match status" value="1"/>
</dbReference>
<dbReference type="HAMAP" id="MF_00164">
    <property type="entry name" value="GlmS"/>
    <property type="match status" value="1"/>
</dbReference>
<dbReference type="InterPro" id="IPR017932">
    <property type="entry name" value="GATase_2_dom"/>
</dbReference>
<dbReference type="InterPro" id="IPR005855">
    <property type="entry name" value="GFAT"/>
</dbReference>
<dbReference type="InterPro" id="IPR047084">
    <property type="entry name" value="GFAT_N"/>
</dbReference>
<dbReference type="InterPro" id="IPR035466">
    <property type="entry name" value="GlmS/AgaS_SIS"/>
</dbReference>
<dbReference type="InterPro" id="IPR035490">
    <property type="entry name" value="GlmS/FrlB_SIS"/>
</dbReference>
<dbReference type="InterPro" id="IPR029055">
    <property type="entry name" value="Ntn_hydrolases_N"/>
</dbReference>
<dbReference type="InterPro" id="IPR001347">
    <property type="entry name" value="SIS_dom"/>
</dbReference>
<dbReference type="InterPro" id="IPR046348">
    <property type="entry name" value="SIS_dom_sf"/>
</dbReference>
<dbReference type="NCBIfam" id="TIGR01135">
    <property type="entry name" value="glmS"/>
    <property type="match status" value="1"/>
</dbReference>
<dbReference type="NCBIfam" id="NF001484">
    <property type="entry name" value="PRK00331.1"/>
    <property type="match status" value="1"/>
</dbReference>
<dbReference type="PANTHER" id="PTHR10937">
    <property type="entry name" value="GLUCOSAMINE--FRUCTOSE-6-PHOSPHATE AMINOTRANSFERASE, ISOMERIZING"/>
    <property type="match status" value="1"/>
</dbReference>
<dbReference type="PANTHER" id="PTHR10937:SF0">
    <property type="entry name" value="GLUTAMINE--FRUCTOSE-6-PHOSPHATE TRANSAMINASE (ISOMERIZING)"/>
    <property type="match status" value="1"/>
</dbReference>
<dbReference type="Pfam" id="PF13522">
    <property type="entry name" value="GATase_6"/>
    <property type="match status" value="1"/>
</dbReference>
<dbReference type="Pfam" id="PF01380">
    <property type="entry name" value="SIS"/>
    <property type="match status" value="2"/>
</dbReference>
<dbReference type="SUPFAM" id="SSF56235">
    <property type="entry name" value="N-terminal nucleophile aminohydrolases (Ntn hydrolases)"/>
    <property type="match status" value="1"/>
</dbReference>
<dbReference type="SUPFAM" id="SSF53697">
    <property type="entry name" value="SIS domain"/>
    <property type="match status" value="1"/>
</dbReference>
<dbReference type="PROSITE" id="PS51278">
    <property type="entry name" value="GATASE_TYPE_2"/>
    <property type="match status" value="1"/>
</dbReference>
<dbReference type="PROSITE" id="PS51464">
    <property type="entry name" value="SIS"/>
    <property type="match status" value="2"/>
</dbReference>
<proteinExistence type="inferred from homology"/>
<gene>
    <name evidence="1" type="primary">glmS</name>
    <name type="ordered locus">BQ2027_MB3466C</name>
</gene>
<reference key="1">
    <citation type="journal article" date="2003" name="Proc. Natl. Acad. Sci. U.S.A.">
        <title>The complete genome sequence of Mycobacterium bovis.</title>
        <authorList>
            <person name="Garnier T."/>
            <person name="Eiglmeier K."/>
            <person name="Camus J.-C."/>
            <person name="Medina N."/>
            <person name="Mansoor H."/>
            <person name="Pryor M."/>
            <person name="Duthoy S."/>
            <person name="Grondin S."/>
            <person name="Lacroix C."/>
            <person name="Monsempe C."/>
            <person name="Simon S."/>
            <person name="Harris B."/>
            <person name="Atkin R."/>
            <person name="Doggett J."/>
            <person name="Mayes R."/>
            <person name="Keating L."/>
            <person name="Wheeler P.R."/>
            <person name="Parkhill J."/>
            <person name="Barrell B.G."/>
            <person name="Cole S.T."/>
            <person name="Gordon S.V."/>
            <person name="Hewinson R.G."/>
        </authorList>
    </citation>
    <scope>NUCLEOTIDE SEQUENCE [LARGE SCALE GENOMIC DNA]</scope>
    <source>
        <strain>ATCC BAA-935 / AF2122/97</strain>
    </source>
</reference>
<reference key="2">
    <citation type="journal article" date="2017" name="Genome Announc.">
        <title>Updated reference genome sequence and annotation of Mycobacterium bovis AF2122/97.</title>
        <authorList>
            <person name="Malone K.M."/>
            <person name="Farrell D."/>
            <person name="Stuber T.P."/>
            <person name="Schubert O.T."/>
            <person name="Aebersold R."/>
            <person name="Robbe-Austerman S."/>
            <person name="Gordon S.V."/>
        </authorList>
    </citation>
    <scope>NUCLEOTIDE SEQUENCE [LARGE SCALE GENOMIC DNA]</scope>
    <scope>GENOME REANNOTATION</scope>
    <source>
        <strain>ATCC BAA-935 / AF2122/97</strain>
    </source>
</reference>